<evidence type="ECO:0000250" key="1"/>
<evidence type="ECO:0000255" key="2">
    <source>
        <dbReference type="HAMAP-Rule" id="MF_01269"/>
    </source>
</evidence>
<comment type="function">
    <text evidence="2">Catalyzes the specific phosphorylation of the 3-hydroxyl group of shikimic acid using ATP as a cosubstrate.</text>
</comment>
<comment type="catalytic activity">
    <reaction evidence="2">
        <text>shikimate + ATP = 3-phosphoshikimate + ADP + H(+)</text>
        <dbReference type="Rhea" id="RHEA:13121"/>
        <dbReference type="ChEBI" id="CHEBI:15378"/>
        <dbReference type="ChEBI" id="CHEBI:30616"/>
        <dbReference type="ChEBI" id="CHEBI:36208"/>
        <dbReference type="ChEBI" id="CHEBI:145989"/>
        <dbReference type="ChEBI" id="CHEBI:456216"/>
        <dbReference type="EC" id="2.7.1.71"/>
    </reaction>
</comment>
<comment type="cofactor">
    <cofactor evidence="2">
        <name>Mg(2+)</name>
        <dbReference type="ChEBI" id="CHEBI:18420"/>
    </cofactor>
    <text evidence="2">Binds 1 Mg(2+) ion per subunit.</text>
</comment>
<comment type="pathway">
    <text evidence="2">Metabolic intermediate biosynthesis; chorismate biosynthesis; chorismate from D-erythrose 4-phosphate and phosphoenolpyruvate: step 5/7.</text>
</comment>
<comment type="subunit">
    <text evidence="2">Monomer.</text>
</comment>
<comment type="subcellular location">
    <subcellularLocation>
        <location evidence="2">Cytoplasm</location>
    </subcellularLocation>
</comment>
<comment type="domain">
    <text evidence="2">The LID domain closes over the active site upon ATP binding.</text>
</comment>
<comment type="similarity">
    <text evidence="2">Belongs to the shikimate kinase family. AroL subfamily.</text>
</comment>
<accession>Q3Z522</accession>
<sequence length="174" mass="19151">MTQPLFLIGPRGCGKTTVGMALADSLNRRFVDTDQWLQSQLNMTVAEIVEREEWAGFRARETAALEAVTAPSTVIATGGGIILTEFNRHFMQNNGIVVYLCAPVSVLVNRLQAAPEEDLRPTLTGKPLSEEVQEVLEERDALYREVAHIIIDATNEPSQVISEIRSALAQTINC</sequence>
<name>AROL_SHISS</name>
<organism>
    <name type="scientific">Shigella sonnei (strain Ss046)</name>
    <dbReference type="NCBI Taxonomy" id="300269"/>
    <lineage>
        <taxon>Bacteria</taxon>
        <taxon>Pseudomonadati</taxon>
        <taxon>Pseudomonadota</taxon>
        <taxon>Gammaproteobacteria</taxon>
        <taxon>Enterobacterales</taxon>
        <taxon>Enterobacteriaceae</taxon>
        <taxon>Shigella</taxon>
    </lineage>
</organism>
<gene>
    <name evidence="2" type="primary">aroL</name>
    <name type="ordered locus">SSON_0364</name>
</gene>
<protein>
    <recommendedName>
        <fullName evidence="2">Shikimate kinase 2</fullName>
        <shortName evidence="2">SK 2</shortName>
        <ecNumber evidence="2">2.7.1.71</ecNumber>
    </recommendedName>
</protein>
<proteinExistence type="inferred from homology"/>
<reference key="1">
    <citation type="journal article" date="2005" name="Nucleic Acids Res.">
        <title>Genome dynamics and diversity of Shigella species, the etiologic agents of bacillary dysentery.</title>
        <authorList>
            <person name="Yang F."/>
            <person name="Yang J."/>
            <person name="Zhang X."/>
            <person name="Chen L."/>
            <person name="Jiang Y."/>
            <person name="Yan Y."/>
            <person name="Tang X."/>
            <person name="Wang J."/>
            <person name="Xiong Z."/>
            <person name="Dong J."/>
            <person name="Xue Y."/>
            <person name="Zhu Y."/>
            <person name="Xu X."/>
            <person name="Sun L."/>
            <person name="Chen S."/>
            <person name="Nie H."/>
            <person name="Peng J."/>
            <person name="Xu J."/>
            <person name="Wang Y."/>
            <person name="Yuan Z."/>
            <person name="Wen Y."/>
            <person name="Yao Z."/>
            <person name="Shen Y."/>
            <person name="Qiang B."/>
            <person name="Hou Y."/>
            <person name="Yu J."/>
            <person name="Jin Q."/>
        </authorList>
    </citation>
    <scope>NUCLEOTIDE SEQUENCE [LARGE SCALE GENOMIC DNA]</scope>
    <source>
        <strain>Ss046</strain>
    </source>
</reference>
<dbReference type="EC" id="2.7.1.71" evidence="2"/>
<dbReference type="EMBL" id="CP000038">
    <property type="protein sequence ID" value="AAZ87140.1"/>
    <property type="molecule type" value="Genomic_DNA"/>
</dbReference>
<dbReference type="RefSeq" id="WP_000193393.1">
    <property type="nucleotide sequence ID" value="NC_007384.1"/>
</dbReference>
<dbReference type="SMR" id="Q3Z522"/>
<dbReference type="GeneID" id="93777073"/>
<dbReference type="KEGG" id="ssn:SSON_0364"/>
<dbReference type="HOGENOM" id="CLU_057607_4_3_6"/>
<dbReference type="UniPathway" id="UPA00053">
    <property type="reaction ID" value="UER00088"/>
</dbReference>
<dbReference type="Proteomes" id="UP000002529">
    <property type="component" value="Chromosome"/>
</dbReference>
<dbReference type="GO" id="GO:0005829">
    <property type="term" value="C:cytosol"/>
    <property type="evidence" value="ECO:0007669"/>
    <property type="project" value="TreeGrafter"/>
</dbReference>
<dbReference type="GO" id="GO:0005524">
    <property type="term" value="F:ATP binding"/>
    <property type="evidence" value="ECO:0007669"/>
    <property type="project" value="UniProtKB-UniRule"/>
</dbReference>
<dbReference type="GO" id="GO:0000287">
    <property type="term" value="F:magnesium ion binding"/>
    <property type="evidence" value="ECO:0007669"/>
    <property type="project" value="UniProtKB-UniRule"/>
</dbReference>
<dbReference type="GO" id="GO:0004765">
    <property type="term" value="F:shikimate kinase activity"/>
    <property type="evidence" value="ECO:0007669"/>
    <property type="project" value="UniProtKB-UniRule"/>
</dbReference>
<dbReference type="GO" id="GO:0008652">
    <property type="term" value="P:amino acid biosynthetic process"/>
    <property type="evidence" value="ECO:0007669"/>
    <property type="project" value="UniProtKB-KW"/>
</dbReference>
<dbReference type="GO" id="GO:0009073">
    <property type="term" value="P:aromatic amino acid family biosynthetic process"/>
    <property type="evidence" value="ECO:0007669"/>
    <property type="project" value="UniProtKB-KW"/>
</dbReference>
<dbReference type="GO" id="GO:0009423">
    <property type="term" value="P:chorismate biosynthetic process"/>
    <property type="evidence" value="ECO:0007669"/>
    <property type="project" value="UniProtKB-UniRule"/>
</dbReference>
<dbReference type="CDD" id="cd00464">
    <property type="entry name" value="SK"/>
    <property type="match status" value="1"/>
</dbReference>
<dbReference type="FunFam" id="3.40.50.300:FF:000408">
    <property type="entry name" value="Shikimate kinase 2"/>
    <property type="match status" value="1"/>
</dbReference>
<dbReference type="Gene3D" id="3.40.50.300">
    <property type="entry name" value="P-loop containing nucleotide triphosphate hydrolases"/>
    <property type="match status" value="1"/>
</dbReference>
<dbReference type="HAMAP" id="MF_00109">
    <property type="entry name" value="Shikimate_kinase"/>
    <property type="match status" value="1"/>
</dbReference>
<dbReference type="HAMAP" id="MF_01269">
    <property type="entry name" value="Shikimate_kinase_2"/>
    <property type="match status" value="1"/>
</dbReference>
<dbReference type="InterPro" id="IPR027417">
    <property type="entry name" value="P-loop_NTPase"/>
</dbReference>
<dbReference type="InterPro" id="IPR031322">
    <property type="entry name" value="Shikimate/glucono_kinase"/>
</dbReference>
<dbReference type="InterPro" id="IPR000623">
    <property type="entry name" value="Shikimate_kinase/TSH1"/>
</dbReference>
<dbReference type="InterPro" id="IPR027544">
    <property type="entry name" value="Shikimate_kinase_2"/>
</dbReference>
<dbReference type="InterPro" id="IPR023000">
    <property type="entry name" value="Shikimate_kinase_CS"/>
</dbReference>
<dbReference type="NCBIfam" id="NF002988">
    <property type="entry name" value="PRK03731.1"/>
    <property type="match status" value="1"/>
</dbReference>
<dbReference type="PANTHER" id="PTHR21087">
    <property type="entry name" value="SHIKIMATE KINASE"/>
    <property type="match status" value="1"/>
</dbReference>
<dbReference type="PANTHER" id="PTHR21087:SF21">
    <property type="entry name" value="SHIKIMATE KINASE 2"/>
    <property type="match status" value="1"/>
</dbReference>
<dbReference type="Pfam" id="PF01202">
    <property type="entry name" value="SKI"/>
    <property type="match status" value="1"/>
</dbReference>
<dbReference type="PRINTS" id="PR01100">
    <property type="entry name" value="SHIKIMTKNASE"/>
</dbReference>
<dbReference type="SUPFAM" id="SSF52540">
    <property type="entry name" value="P-loop containing nucleoside triphosphate hydrolases"/>
    <property type="match status" value="1"/>
</dbReference>
<dbReference type="PROSITE" id="PS01128">
    <property type="entry name" value="SHIKIMATE_KINASE"/>
    <property type="match status" value="1"/>
</dbReference>
<keyword id="KW-0028">Amino-acid biosynthesis</keyword>
<keyword id="KW-0057">Aromatic amino acid biosynthesis</keyword>
<keyword id="KW-0067">ATP-binding</keyword>
<keyword id="KW-0963">Cytoplasm</keyword>
<keyword id="KW-0418">Kinase</keyword>
<keyword id="KW-0460">Magnesium</keyword>
<keyword id="KW-0479">Metal-binding</keyword>
<keyword id="KW-0547">Nucleotide-binding</keyword>
<keyword id="KW-1185">Reference proteome</keyword>
<keyword id="KW-0808">Transferase</keyword>
<feature type="initiator methionine" description="Removed" evidence="1">
    <location>
        <position position="1"/>
    </location>
</feature>
<feature type="chain" id="PRO_0000237935" description="Shikimate kinase 2">
    <location>
        <begin position="2"/>
        <end position="174"/>
    </location>
</feature>
<feature type="region of interest" description="LID domain">
    <location>
        <begin position="112"/>
        <end position="126"/>
    </location>
</feature>
<feature type="binding site" evidence="2">
    <location>
        <begin position="12"/>
        <end position="17"/>
    </location>
    <ligand>
        <name>ATP</name>
        <dbReference type="ChEBI" id="CHEBI:30616"/>
    </ligand>
</feature>
<feature type="binding site" evidence="2">
    <location>
        <position position="16"/>
    </location>
    <ligand>
        <name>Mg(2+)</name>
        <dbReference type="ChEBI" id="CHEBI:18420"/>
    </ligand>
</feature>
<feature type="binding site" evidence="2">
    <location>
        <position position="32"/>
    </location>
    <ligand>
        <name>Mg(2+)</name>
        <dbReference type="ChEBI" id="CHEBI:18420"/>
    </ligand>
</feature>
<feature type="binding site" evidence="2">
    <location>
        <position position="34"/>
    </location>
    <ligand>
        <name>substrate</name>
    </ligand>
</feature>
<feature type="binding site" evidence="2">
    <location>
        <position position="58"/>
    </location>
    <ligand>
        <name>substrate</name>
    </ligand>
</feature>
<feature type="binding site" evidence="2">
    <location>
        <position position="79"/>
    </location>
    <ligand>
        <name>substrate</name>
    </ligand>
</feature>
<feature type="binding site" evidence="2">
    <location>
        <position position="120"/>
    </location>
    <ligand>
        <name>ATP</name>
        <dbReference type="ChEBI" id="CHEBI:30616"/>
    </ligand>
</feature>
<feature type="binding site" evidence="2">
    <location>
        <position position="139"/>
    </location>
    <ligand>
        <name>substrate</name>
    </ligand>
</feature>